<gene>
    <name evidence="1" type="primary">rmf</name>
    <name type="ordered locus">IL1286</name>
</gene>
<keyword id="KW-0963">Cytoplasm</keyword>
<keyword id="KW-1185">Reference proteome</keyword>
<keyword id="KW-0810">Translation regulation</keyword>
<evidence type="ECO:0000255" key="1">
    <source>
        <dbReference type="HAMAP-Rule" id="MF_00919"/>
    </source>
</evidence>
<evidence type="ECO:0000256" key="2">
    <source>
        <dbReference type="SAM" id="MobiDB-lite"/>
    </source>
</evidence>
<name>RMF_IDILO</name>
<organism>
    <name type="scientific">Idiomarina loihiensis (strain ATCC BAA-735 / DSM 15497 / L2-TR)</name>
    <dbReference type="NCBI Taxonomy" id="283942"/>
    <lineage>
        <taxon>Bacteria</taxon>
        <taxon>Pseudomonadati</taxon>
        <taxon>Pseudomonadota</taxon>
        <taxon>Gammaproteobacteria</taxon>
        <taxon>Alteromonadales</taxon>
        <taxon>Idiomarinaceae</taxon>
        <taxon>Idiomarina</taxon>
    </lineage>
</organism>
<comment type="function">
    <text evidence="1">During stationary phase, converts 70S ribosomes to an inactive dimeric form (100S ribosomes).</text>
</comment>
<comment type="subcellular location">
    <subcellularLocation>
        <location evidence="1">Cytoplasm</location>
    </subcellularLocation>
</comment>
<comment type="similarity">
    <text evidence="1">Belongs to the ribosome modulation factor family.</text>
</comment>
<reference key="1">
    <citation type="journal article" date="2004" name="Proc. Natl. Acad. Sci. U.S.A.">
        <title>Genome sequence of the deep-sea gamma-proteobacterium Idiomarina loihiensis reveals amino acid fermentation as a source of carbon and energy.</title>
        <authorList>
            <person name="Hou S."/>
            <person name="Saw J.H."/>
            <person name="Lee K.S."/>
            <person name="Freitas T.A."/>
            <person name="Belisle C."/>
            <person name="Kawarabayasi Y."/>
            <person name="Donachie S.P."/>
            <person name="Pikina A."/>
            <person name="Galperin M.Y."/>
            <person name="Koonin E.V."/>
            <person name="Makarova K.S."/>
            <person name="Omelchenko M.V."/>
            <person name="Sorokin A."/>
            <person name="Wolf Y.I."/>
            <person name="Li Q.X."/>
            <person name="Keum Y.S."/>
            <person name="Campbell S."/>
            <person name="Denery J."/>
            <person name="Aizawa S."/>
            <person name="Shibata S."/>
            <person name="Malahoff A."/>
            <person name="Alam M."/>
        </authorList>
    </citation>
    <scope>NUCLEOTIDE SEQUENCE [LARGE SCALE GENOMIC DNA]</scope>
    <source>
        <strain>ATCC BAA-735 / DSM 15497 / L2-TR</strain>
    </source>
</reference>
<accession>Q5QYY1</accession>
<dbReference type="EMBL" id="AE017340">
    <property type="protein sequence ID" value="AAV82126.1"/>
    <property type="molecule type" value="Genomic_DNA"/>
</dbReference>
<dbReference type="RefSeq" id="WP_011234532.1">
    <property type="nucleotide sequence ID" value="NC_006512.1"/>
</dbReference>
<dbReference type="SMR" id="Q5QYY1"/>
<dbReference type="STRING" id="283942.IL1286"/>
<dbReference type="GeneID" id="41336462"/>
<dbReference type="KEGG" id="ilo:IL1286"/>
<dbReference type="eggNOG" id="COG3130">
    <property type="taxonomic scope" value="Bacteria"/>
</dbReference>
<dbReference type="HOGENOM" id="CLU_203350_0_0_6"/>
<dbReference type="OrthoDB" id="5917763at2"/>
<dbReference type="Proteomes" id="UP000001171">
    <property type="component" value="Chromosome"/>
</dbReference>
<dbReference type="GO" id="GO:0005737">
    <property type="term" value="C:cytoplasm"/>
    <property type="evidence" value="ECO:0007669"/>
    <property type="project" value="UniProtKB-SubCell"/>
</dbReference>
<dbReference type="GO" id="GO:0006417">
    <property type="term" value="P:regulation of translation"/>
    <property type="evidence" value="ECO:0007669"/>
    <property type="project" value="UniProtKB-UniRule"/>
</dbReference>
<dbReference type="Gene3D" id="1.10.10.620">
    <property type="entry name" value="ribosome modulation factor like domain"/>
    <property type="match status" value="1"/>
</dbReference>
<dbReference type="HAMAP" id="MF_00919">
    <property type="entry name" value="RMF"/>
    <property type="match status" value="1"/>
</dbReference>
<dbReference type="InterPro" id="IPR007040">
    <property type="entry name" value="Ribosome_modulation_factor"/>
</dbReference>
<dbReference type="InterPro" id="IPR023200">
    <property type="entry name" value="RMF_sf"/>
</dbReference>
<dbReference type="NCBIfam" id="NF011162">
    <property type="entry name" value="PRK14563.1"/>
    <property type="match status" value="1"/>
</dbReference>
<dbReference type="NCBIfam" id="NF041886">
    <property type="entry name" value="Rmf_CrpP_fam"/>
    <property type="match status" value="1"/>
</dbReference>
<dbReference type="Pfam" id="PF04957">
    <property type="entry name" value="RMF"/>
    <property type="match status" value="1"/>
</dbReference>
<proteinExistence type="inferred from homology"/>
<protein>
    <recommendedName>
        <fullName evidence="1">Ribosome modulation factor</fullName>
        <shortName evidence="1">RMF</shortName>
    </recommendedName>
</protein>
<sequence>MKRQKRDRFERAHTQGFKAGLHGRSKDNCPYQTQDDFRSHWLGGWRDAMEARNTGLFR</sequence>
<feature type="chain" id="PRO_0000416474" description="Ribosome modulation factor">
    <location>
        <begin position="1"/>
        <end position="58"/>
    </location>
</feature>
<feature type="region of interest" description="Disordered" evidence="2">
    <location>
        <begin position="1"/>
        <end position="28"/>
    </location>
</feature>